<evidence type="ECO:0000255" key="1">
    <source>
        <dbReference type="HAMAP-Rule" id="MF_01177"/>
    </source>
</evidence>
<comment type="function">
    <text evidence="1">Nitric oxide-sensitive repressor of genes involved in protecting the cell against nitrosative stress. May require iron for activity.</text>
</comment>
<comment type="cofactor">
    <cofactor evidence="1">
        <name>[2Fe-2S] cluster</name>
        <dbReference type="ChEBI" id="CHEBI:190135"/>
    </cofactor>
    <text evidence="1">Binds 1 [2Fe-2S] cluster per subunit.</text>
</comment>
<protein>
    <recommendedName>
        <fullName evidence="1">HTH-type transcriptional repressor NsrR</fullName>
    </recommendedName>
</protein>
<feature type="chain" id="PRO_1000085437" description="HTH-type transcriptional repressor NsrR">
    <location>
        <begin position="1"/>
        <end position="141"/>
    </location>
</feature>
<feature type="domain" description="HTH rrf2-type" evidence="1">
    <location>
        <begin position="2"/>
        <end position="129"/>
    </location>
</feature>
<feature type="DNA-binding region" description="H-T-H motif" evidence="1">
    <location>
        <begin position="28"/>
        <end position="51"/>
    </location>
</feature>
<feature type="binding site" evidence="1">
    <location>
        <position position="91"/>
    </location>
    <ligand>
        <name>[2Fe-2S] cluster</name>
        <dbReference type="ChEBI" id="CHEBI:190135"/>
    </ligand>
</feature>
<feature type="binding site" evidence="1">
    <location>
        <position position="96"/>
    </location>
    <ligand>
        <name>[2Fe-2S] cluster</name>
        <dbReference type="ChEBI" id="CHEBI:190135"/>
    </ligand>
</feature>
<feature type="binding site" evidence="1">
    <location>
        <position position="102"/>
    </location>
    <ligand>
        <name>[2Fe-2S] cluster</name>
        <dbReference type="ChEBI" id="CHEBI:190135"/>
    </ligand>
</feature>
<organism>
    <name type="scientific">Serratia proteamaculans (strain 568)</name>
    <dbReference type="NCBI Taxonomy" id="399741"/>
    <lineage>
        <taxon>Bacteria</taxon>
        <taxon>Pseudomonadati</taxon>
        <taxon>Pseudomonadota</taxon>
        <taxon>Gammaproteobacteria</taxon>
        <taxon>Enterobacterales</taxon>
        <taxon>Yersiniaceae</taxon>
        <taxon>Serratia</taxon>
    </lineage>
</organism>
<keyword id="KW-0001">2Fe-2S</keyword>
<keyword id="KW-0238">DNA-binding</keyword>
<keyword id="KW-0408">Iron</keyword>
<keyword id="KW-0411">Iron-sulfur</keyword>
<keyword id="KW-0479">Metal-binding</keyword>
<keyword id="KW-0678">Repressor</keyword>
<keyword id="KW-0804">Transcription</keyword>
<keyword id="KW-0805">Transcription regulation</keyword>
<sequence length="141" mass="15650">MQLTSFTDYGLRALIYMASLPPDKMTSISEVTEVYGVSRNHMVKIINQLSRVGFVTAVRGKNGGIRLGKPAETIRLGDVVRALEPLSLVNCNSTFCHITPACRLKQVLQQGVQNFLEELDSHTLADMVEDNPSLYKLLLVE</sequence>
<proteinExistence type="inferred from homology"/>
<dbReference type="EMBL" id="CP000826">
    <property type="protein sequence ID" value="ABV39545.1"/>
    <property type="molecule type" value="Genomic_DNA"/>
</dbReference>
<dbReference type="SMR" id="A8G8V5"/>
<dbReference type="STRING" id="399741.Spro_0437"/>
<dbReference type="KEGG" id="spe:Spro_0437"/>
<dbReference type="eggNOG" id="COG1959">
    <property type="taxonomic scope" value="Bacteria"/>
</dbReference>
<dbReference type="HOGENOM" id="CLU_107144_2_1_6"/>
<dbReference type="OrthoDB" id="9795923at2"/>
<dbReference type="GO" id="GO:0005829">
    <property type="term" value="C:cytosol"/>
    <property type="evidence" value="ECO:0007669"/>
    <property type="project" value="TreeGrafter"/>
</dbReference>
<dbReference type="GO" id="GO:0051537">
    <property type="term" value="F:2 iron, 2 sulfur cluster binding"/>
    <property type="evidence" value="ECO:0007669"/>
    <property type="project" value="UniProtKB-KW"/>
</dbReference>
<dbReference type="GO" id="GO:0003700">
    <property type="term" value="F:DNA-binding transcription factor activity"/>
    <property type="evidence" value="ECO:0007669"/>
    <property type="project" value="UniProtKB-UniRule"/>
</dbReference>
<dbReference type="GO" id="GO:0003690">
    <property type="term" value="F:double-stranded DNA binding"/>
    <property type="evidence" value="ECO:0007669"/>
    <property type="project" value="UniProtKB-UniRule"/>
</dbReference>
<dbReference type="GO" id="GO:0005506">
    <property type="term" value="F:iron ion binding"/>
    <property type="evidence" value="ECO:0007669"/>
    <property type="project" value="UniProtKB-UniRule"/>
</dbReference>
<dbReference type="GO" id="GO:0045892">
    <property type="term" value="P:negative regulation of DNA-templated transcription"/>
    <property type="evidence" value="ECO:0007669"/>
    <property type="project" value="InterPro"/>
</dbReference>
<dbReference type="FunFam" id="1.10.10.10:FF:000105">
    <property type="entry name" value="HTH-type transcriptional repressor NsrR"/>
    <property type="match status" value="1"/>
</dbReference>
<dbReference type="Gene3D" id="1.10.10.10">
    <property type="entry name" value="Winged helix-like DNA-binding domain superfamily/Winged helix DNA-binding domain"/>
    <property type="match status" value="1"/>
</dbReference>
<dbReference type="HAMAP" id="MF_01177">
    <property type="entry name" value="HTH_type_NsrR"/>
    <property type="match status" value="1"/>
</dbReference>
<dbReference type="InterPro" id="IPR000944">
    <property type="entry name" value="Tscrpt_reg_Rrf2"/>
</dbReference>
<dbReference type="InterPro" id="IPR023761">
    <property type="entry name" value="Tscrpt_rep_HTH_NsrR"/>
</dbReference>
<dbReference type="InterPro" id="IPR036388">
    <property type="entry name" value="WH-like_DNA-bd_sf"/>
</dbReference>
<dbReference type="InterPro" id="IPR036390">
    <property type="entry name" value="WH_DNA-bd_sf"/>
</dbReference>
<dbReference type="NCBIfam" id="NF008240">
    <property type="entry name" value="PRK11014.1"/>
    <property type="match status" value="1"/>
</dbReference>
<dbReference type="NCBIfam" id="TIGR00738">
    <property type="entry name" value="rrf2_super"/>
    <property type="match status" value="1"/>
</dbReference>
<dbReference type="PANTHER" id="PTHR33221:SF4">
    <property type="entry name" value="HTH-TYPE TRANSCRIPTIONAL REPRESSOR NSRR"/>
    <property type="match status" value="1"/>
</dbReference>
<dbReference type="PANTHER" id="PTHR33221">
    <property type="entry name" value="WINGED HELIX-TURN-HELIX TRANSCRIPTIONAL REGULATOR, RRF2 FAMILY"/>
    <property type="match status" value="1"/>
</dbReference>
<dbReference type="Pfam" id="PF02082">
    <property type="entry name" value="Rrf2"/>
    <property type="match status" value="1"/>
</dbReference>
<dbReference type="SUPFAM" id="SSF46785">
    <property type="entry name" value="Winged helix' DNA-binding domain"/>
    <property type="match status" value="1"/>
</dbReference>
<dbReference type="PROSITE" id="PS51197">
    <property type="entry name" value="HTH_RRF2_2"/>
    <property type="match status" value="1"/>
</dbReference>
<gene>
    <name evidence="1" type="primary">nsrR</name>
    <name type="ordered locus">Spro_0437</name>
</gene>
<accession>A8G8V5</accession>
<reference key="1">
    <citation type="submission" date="2007-09" db="EMBL/GenBank/DDBJ databases">
        <title>Complete sequence of chromosome of Serratia proteamaculans 568.</title>
        <authorList>
            <consortium name="US DOE Joint Genome Institute"/>
            <person name="Copeland A."/>
            <person name="Lucas S."/>
            <person name="Lapidus A."/>
            <person name="Barry K."/>
            <person name="Glavina del Rio T."/>
            <person name="Dalin E."/>
            <person name="Tice H."/>
            <person name="Pitluck S."/>
            <person name="Chain P."/>
            <person name="Malfatti S."/>
            <person name="Shin M."/>
            <person name="Vergez L."/>
            <person name="Schmutz J."/>
            <person name="Larimer F."/>
            <person name="Land M."/>
            <person name="Hauser L."/>
            <person name="Kyrpides N."/>
            <person name="Kim E."/>
            <person name="Taghavi S."/>
            <person name="Newman L."/>
            <person name="Vangronsveld J."/>
            <person name="van der Lelie D."/>
            <person name="Richardson P."/>
        </authorList>
    </citation>
    <scope>NUCLEOTIDE SEQUENCE [LARGE SCALE GENOMIC DNA]</scope>
    <source>
        <strain>568</strain>
    </source>
</reference>
<name>NSRR_SERP5</name>